<name>P0_PLRVW</name>
<reference key="1">
    <citation type="journal article" date="1989" name="FEBS Lett.">
        <title>Nucleotide sequence and organization of potato leafroll virus genomic RNA.</title>
        <authorList>
            <person name="van der Wilk F."/>
            <person name="Huisman M.J."/>
            <person name="Cornelissen B.J.C."/>
            <person name="Huttinga H."/>
            <person name="Goldbach R.W."/>
        </authorList>
    </citation>
    <scope>NUCLEOTIDE SEQUENCE [GENOMIC RNA]</scope>
</reference>
<organism>
    <name type="scientific">Potato leafroll virus (strain Potato/Netherlands/Wageningen/1989)</name>
    <name type="common">PLrV</name>
    <dbReference type="NCBI Taxonomy" id="12048"/>
    <lineage>
        <taxon>Viruses</taxon>
        <taxon>Riboviria</taxon>
        <taxon>Orthornavirae</taxon>
        <taxon>Pisuviricota</taxon>
        <taxon>Pisoniviricetes</taxon>
        <taxon>Sobelivirales</taxon>
        <taxon>Solemoviridae</taxon>
        <taxon>Polerovirus</taxon>
        <taxon>Potato leafroll virus</taxon>
    </lineage>
</organism>
<gene>
    <name type="ORF">ORF0</name>
</gene>
<comment type="function">
    <text evidence="1">Suppressor of RNA-mediated gene silencing, also known as post-transcriptional gene silencing (PTGS), a mechanism of plant viral defense that limits the accumulation of viral RNAs. The P0 protein suppresses local PTGS using its F-box-like domain to mediate destabilization and degradation of the AGO1 protein, although not via an interaction with host SKP1A. Participates, together with the proteins P1 and P7, in the inhibition of the induction of aphid-induced host phytohormones. This could play a role in the attraction to the infected plants by aphids.</text>
</comment>
<comment type="domain">
    <text evidence="1">The F-box-like domain is required for suppression of host RNA silencing.</text>
</comment>
<comment type="similarity">
    <text evidence="2">Belongs to the polerovirus P0 protein family.</text>
</comment>
<proteinExistence type="inferred from homology"/>
<evidence type="ECO:0000250" key="1">
    <source>
        <dbReference type="UniProtKB" id="P17518"/>
    </source>
</evidence>
<evidence type="ECO:0000305" key="2"/>
<sequence>MIVLTQSGTLLFDQRFKLSKFLFVVIATGFPLLLQQASLIYGYNHEQIYRICRSFLYILPLLNCKRGRISTSGLQLPRHLHYECLEWGLLCGTHPAIQIVGPTIVIKLDDPTTAAAYRSELLRVSSSSYIQNAAGLSNGWGHDMEAFVRNAICLLELRERSIPQSGLRDLMGNHQHLVRSLLDACKVDHFVPLDFQHRSLMLNFARLYNQLDLQGRAKSFRALTGFPVYVPSEDYLEGSFLQKELQE</sequence>
<feature type="chain" id="PRO_0000222394" description="Suppressor of silencing P0">
    <location>
        <begin position="1"/>
        <end position="247"/>
    </location>
</feature>
<feature type="domain" description="F-box-like" evidence="1">
    <location>
        <begin position="76"/>
        <end position="95"/>
    </location>
</feature>
<organismHost>
    <name type="scientific">Solanum tuberosum</name>
    <name type="common">Potato</name>
    <dbReference type="NCBI Taxonomy" id="4113"/>
</organismHost>
<keyword id="KW-0945">Host-virus interaction</keyword>
<keyword id="KW-1090">Inhibition of host innate immune response by virus</keyword>
<keyword id="KW-0941">Suppressor of RNA silencing</keyword>
<keyword id="KW-0899">Viral immunoevasion</keyword>
<protein>
    <recommendedName>
        <fullName>Suppressor of silencing P0</fullName>
    </recommendedName>
    <alternativeName>
        <fullName>28 kDa protein</fullName>
    </alternativeName>
    <alternativeName>
        <fullName>Protein ORF0</fullName>
    </alternativeName>
</protein>
<accession>P11621</accession>
<dbReference type="EMBL" id="Y07496">
    <property type="protein sequence ID" value="CAA68794.1"/>
    <property type="molecule type" value="Genomic_RNA"/>
</dbReference>
<dbReference type="PIR" id="S03546">
    <property type="entry name" value="S03546"/>
</dbReference>
<dbReference type="Proteomes" id="UP000000474">
    <property type="component" value="Genome"/>
</dbReference>
<dbReference type="GO" id="GO:0052170">
    <property type="term" value="P:symbiont-mediated suppression of host innate immune response"/>
    <property type="evidence" value="ECO:0007669"/>
    <property type="project" value="UniProtKB-KW"/>
</dbReference>
<dbReference type="GO" id="GO:0016032">
    <property type="term" value="P:viral process"/>
    <property type="evidence" value="ECO:0007669"/>
    <property type="project" value="InterPro"/>
</dbReference>
<dbReference type="InterPro" id="IPR006755">
    <property type="entry name" value="Virus_P0"/>
</dbReference>
<dbReference type="Pfam" id="PF04662">
    <property type="entry name" value="Luteo_PO"/>
    <property type="match status" value="1"/>
</dbReference>